<sequence>MAANWEKVENNQGVLTIEVDATQVDAALDQAFKKVVQKVQVPGFRKGKVPRKMFESRFGVESLYQDALDILLPTAYGQAVREAGIEPVDRPEVDVTQMEQGKNLIFKATVTVKPEVKLGDYKGLSIEEKDFSVTEESVDAELKRMQERHAELVAVEEGAAQTGDIAVIDFEGFQDGVAFEGGKAEDYSLELGSGTFIAGFEEQLAGLNIGEEKEITVTFPEEYHSPNLAGKEAVFKVKLNSLKRKNMPVLDDEFAKDVSEFDTLEELKADTKKKLEEKTAQEKDQYVREQLVLKAAENAEIDLPAVMVEHELDQMVNEFGQRLQYQGMTLELYYQFSGMDESQLRDQLRADATSRVRTSLTLEAIGKAENIEATEEDVNAELDKLAGVYGRPADELRKIFSAQDGMAALYRDVQTRKTVDLLVAESKVTA</sequence>
<organism>
    <name type="scientific">Brevibacillus brevis (strain 47 / JCM 6285 / NBRC 100599)</name>
    <dbReference type="NCBI Taxonomy" id="358681"/>
    <lineage>
        <taxon>Bacteria</taxon>
        <taxon>Bacillati</taxon>
        <taxon>Bacillota</taxon>
        <taxon>Bacilli</taxon>
        <taxon>Bacillales</taxon>
        <taxon>Paenibacillaceae</taxon>
        <taxon>Brevibacillus</taxon>
    </lineage>
</organism>
<dbReference type="EC" id="5.2.1.8" evidence="1"/>
<dbReference type="EMBL" id="AP008955">
    <property type="protein sequence ID" value="BAH42770.1"/>
    <property type="molecule type" value="Genomic_DNA"/>
</dbReference>
<dbReference type="RefSeq" id="WP_012685513.1">
    <property type="nucleotide sequence ID" value="NC_012491.1"/>
</dbReference>
<dbReference type="SMR" id="C0ZAG1"/>
<dbReference type="STRING" id="358681.BBR47_17930"/>
<dbReference type="KEGG" id="bbe:BBR47_17930"/>
<dbReference type="eggNOG" id="COG0544">
    <property type="taxonomic scope" value="Bacteria"/>
</dbReference>
<dbReference type="HOGENOM" id="CLU_033058_3_2_9"/>
<dbReference type="Proteomes" id="UP000001877">
    <property type="component" value="Chromosome"/>
</dbReference>
<dbReference type="GO" id="GO:0005737">
    <property type="term" value="C:cytoplasm"/>
    <property type="evidence" value="ECO:0007669"/>
    <property type="project" value="UniProtKB-SubCell"/>
</dbReference>
<dbReference type="GO" id="GO:0003755">
    <property type="term" value="F:peptidyl-prolyl cis-trans isomerase activity"/>
    <property type="evidence" value="ECO:0007669"/>
    <property type="project" value="UniProtKB-UniRule"/>
</dbReference>
<dbReference type="GO" id="GO:0044183">
    <property type="term" value="F:protein folding chaperone"/>
    <property type="evidence" value="ECO:0007669"/>
    <property type="project" value="TreeGrafter"/>
</dbReference>
<dbReference type="GO" id="GO:0043022">
    <property type="term" value="F:ribosome binding"/>
    <property type="evidence" value="ECO:0007669"/>
    <property type="project" value="TreeGrafter"/>
</dbReference>
<dbReference type="GO" id="GO:0051083">
    <property type="term" value="P:'de novo' cotranslational protein folding"/>
    <property type="evidence" value="ECO:0007669"/>
    <property type="project" value="TreeGrafter"/>
</dbReference>
<dbReference type="GO" id="GO:0051301">
    <property type="term" value="P:cell division"/>
    <property type="evidence" value="ECO:0007669"/>
    <property type="project" value="UniProtKB-KW"/>
</dbReference>
<dbReference type="GO" id="GO:0061077">
    <property type="term" value="P:chaperone-mediated protein folding"/>
    <property type="evidence" value="ECO:0007669"/>
    <property type="project" value="TreeGrafter"/>
</dbReference>
<dbReference type="GO" id="GO:0015031">
    <property type="term" value="P:protein transport"/>
    <property type="evidence" value="ECO:0007669"/>
    <property type="project" value="UniProtKB-UniRule"/>
</dbReference>
<dbReference type="GO" id="GO:0043335">
    <property type="term" value="P:protein unfolding"/>
    <property type="evidence" value="ECO:0007669"/>
    <property type="project" value="TreeGrafter"/>
</dbReference>
<dbReference type="FunFam" id="1.10.3120.10:FF:000010">
    <property type="entry name" value="Trigger factor"/>
    <property type="match status" value="1"/>
</dbReference>
<dbReference type="FunFam" id="3.10.50.40:FF:000001">
    <property type="entry name" value="Trigger factor"/>
    <property type="match status" value="1"/>
</dbReference>
<dbReference type="Gene3D" id="3.10.50.40">
    <property type="match status" value="1"/>
</dbReference>
<dbReference type="Gene3D" id="3.30.70.1050">
    <property type="entry name" value="Trigger factor ribosome-binding domain"/>
    <property type="match status" value="1"/>
</dbReference>
<dbReference type="Gene3D" id="1.10.3120.10">
    <property type="entry name" value="Trigger factor, C-terminal domain"/>
    <property type="match status" value="1"/>
</dbReference>
<dbReference type="HAMAP" id="MF_00303">
    <property type="entry name" value="Trigger_factor_Tig"/>
    <property type="match status" value="1"/>
</dbReference>
<dbReference type="InterPro" id="IPR046357">
    <property type="entry name" value="PPIase_dom_sf"/>
</dbReference>
<dbReference type="InterPro" id="IPR001179">
    <property type="entry name" value="PPIase_FKBP_dom"/>
</dbReference>
<dbReference type="InterPro" id="IPR005215">
    <property type="entry name" value="Trig_fac"/>
</dbReference>
<dbReference type="InterPro" id="IPR008880">
    <property type="entry name" value="Trigger_fac_C"/>
</dbReference>
<dbReference type="InterPro" id="IPR037041">
    <property type="entry name" value="Trigger_fac_C_sf"/>
</dbReference>
<dbReference type="InterPro" id="IPR008881">
    <property type="entry name" value="Trigger_fac_ribosome-bd_bac"/>
</dbReference>
<dbReference type="InterPro" id="IPR036611">
    <property type="entry name" value="Trigger_fac_ribosome-bd_sf"/>
</dbReference>
<dbReference type="InterPro" id="IPR027304">
    <property type="entry name" value="Trigger_fact/SurA_dom_sf"/>
</dbReference>
<dbReference type="NCBIfam" id="TIGR00115">
    <property type="entry name" value="tig"/>
    <property type="match status" value="1"/>
</dbReference>
<dbReference type="PANTHER" id="PTHR30560">
    <property type="entry name" value="TRIGGER FACTOR CHAPERONE AND PEPTIDYL-PROLYL CIS/TRANS ISOMERASE"/>
    <property type="match status" value="1"/>
</dbReference>
<dbReference type="PANTHER" id="PTHR30560:SF3">
    <property type="entry name" value="TRIGGER FACTOR-LIKE PROTEIN TIG, CHLOROPLASTIC"/>
    <property type="match status" value="1"/>
</dbReference>
<dbReference type="Pfam" id="PF00254">
    <property type="entry name" value="FKBP_C"/>
    <property type="match status" value="1"/>
</dbReference>
<dbReference type="Pfam" id="PF05698">
    <property type="entry name" value="Trigger_C"/>
    <property type="match status" value="1"/>
</dbReference>
<dbReference type="Pfam" id="PF05697">
    <property type="entry name" value="Trigger_N"/>
    <property type="match status" value="1"/>
</dbReference>
<dbReference type="PIRSF" id="PIRSF003095">
    <property type="entry name" value="Trigger_factor"/>
    <property type="match status" value="1"/>
</dbReference>
<dbReference type="SUPFAM" id="SSF54534">
    <property type="entry name" value="FKBP-like"/>
    <property type="match status" value="1"/>
</dbReference>
<dbReference type="SUPFAM" id="SSF109998">
    <property type="entry name" value="Triger factor/SurA peptide-binding domain-like"/>
    <property type="match status" value="1"/>
</dbReference>
<dbReference type="SUPFAM" id="SSF102735">
    <property type="entry name" value="Trigger factor ribosome-binding domain"/>
    <property type="match status" value="1"/>
</dbReference>
<dbReference type="PROSITE" id="PS50059">
    <property type="entry name" value="FKBP_PPIASE"/>
    <property type="match status" value="1"/>
</dbReference>
<feature type="chain" id="PRO_1000198146" description="Trigger factor">
    <location>
        <begin position="1"/>
        <end position="430"/>
    </location>
</feature>
<feature type="domain" description="PPIase FKBP-type" evidence="1">
    <location>
        <begin position="163"/>
        <end position="248"/>
    </location>
</feature>
<reference key="1">
    <citation type="submission" date="2005-03" db="EMBL/GenBank/DDBJ databases">
        <title>Brevibacillus brevis strain 47, complete genome.</title>
        <authorList>
            <person name="Hosoyama A."/>
            <person name="Yamada R."/>
            <person name="Hongo Y."/>
            <person name="Terui Y."/>
            <person name="Ankai A."/>
            <person name="Masuyama W."/>
            <person name="Sekiguchi M."/>
            <person name="Takeda T."/>
            <person name="Asano K."/>
            <person name="Ohji S."/>
            <person name="Ichikawa N."/>
            <person name="Narita S."/>
            <person name="Aoki N."/>
            <person name="Miura H."/>
            <person name="Matsushita S."/>
            <person name="Sekigawa T."/>
            <person name="Yamagata H."/>
            <person name="Yoshikawa H."/>
            <person name="Udaka S."/>
            <person name="Tanikawa S."/>
            <person name="Fujita N."/>
        </authorList>
    </citation>
    <scope>NUCLEOTIDE SEQUENCE [LARGE SCALE GENOMIC DNA]</scope>
    <source>
        <strain>47 / JCM 6285 / NBRC 100599</strain>
    </source>
</reference>
<protein>
    <recommendedName>
        <fullName evidence="1">Trigger factor</fullName>
        <shortName evidence="1">TF</shortName>
        <ecNumber evidence="1">5.2.1.8</ecNumber>
    </recommendedName>
    <alternativeName>
        <fullName evidence="1">PPIase</fullName>
    </alternativeName>
</protein>
<accession>C0ZAG1</accession>
<keyword id="KW-0131">Cell cycle</keyword>
<keyword id="KW-0132">Cell division</keyword>
<keyword id="KW-0143">Chaperone</keyword>
<keyword id="KW-0963">Cytoplasm</keyword>
<keyword id="KW-0413">Isomerase</keyword>
<keyword id="KW-1185">Reference proteome</keyword>
<keyword id="KW-0697">Rotamase</keyword>
<evidence type="ECO:0000255" key="1">
    <source>
        <dbReference type="HAMAP-Rule" id="MF_00303"/>
    </source>
</evidence>
<gene>
    <name evidence="1" type="primary">tig</name>
    <name type="ordered locus">BBR47_17930</name>
</gene>
<name>TIG_BREBN</name>
<proteinExistence type="inferred from homology"/>
<comment type="function">
    <text evidence="1">Involved in protein export. Acts as a chaperone by maintaining the newly synthesized protein in an open conformation. Functions as a peptidyl-prolyl cis-trans isomerase.</text>
</comment>
<comment type="catalytic activity">
    <reaction evidence="1">
        <text>[protein]-peptidylproline (omega=180) = [protein]-peptidylproline (omega=0)</text>
        <dbReference type="Rhea" id="RHEA:16237"/>
        <dbReference type="Rhea" id="RHEA-COMP:10747"/>
        <dbReference type="Rhea" id="RHEA-COMP:10748"/>
        <dbReference type="ChEBI" id="CHEBI:83833"/>
        <dbReference type="ChEBI" id="CHEBI:83834"/>
        <dbReference type="EC" id="5.2.1.8"/>
    </reaction>
</comment>
<comment type="subcellular location">
    <subcellularLocation>
        <location>Cytoplasm</location>
    </subcellularLocation>
    <text evidence="1">About half TF is bound to the ribosome near the polypeptide exit tunnel while the other half is free in the cytoplasm.</text>
</comment>
<comment type="domain">
    <text evidence="1">Consists of 3 domains; the N-terminus binds the ribosome, the middle domain has PPIase activity, while the C-terminus has intrinsic chaperone activity on its own.</text>
</comment>
<comment type="similarity">
    <text evidence="1">Belongs to the FKBP-type PPIase family. Tig subfamily.</text>
</comment>